<keyword id="KW-0030">Aminoacyl-tRNA synthetase</keyword>
<keyword id="KW-0067">ATP-binding</keyword>
<keyword id="KW-0963">Cytoplasm</keyword>
<keyword id="KW-0436">Ligase</keyword>
<keyword id="KW-0479">Metal-binding</keyword>
<keyword id="KW-0547">Nucleotide-binding</keyword>
<keyword id="KW-0648">Protein biosynthesis</keyword>
<keyword id="KW-1185">Reference proteome</keyword>
<keyword id="KW-0862">Zinc</keyword>
<reference key="1">
    <citation type="journal article" date="2001" name="Genome Res.">
        <title>The complete genome sequence of the lactic acid bacterium Lactococcus lactis ssp. lactis IL1403.</title>
        <authorList>
            <person name="Bolotin A."/>
            <person name="Wincker P."/>
            <person name="Mauger S."/>
            <person name="Jaillon O."/>
            <person name="Malarme K."/>
            <person name="Weissenbach J."/>
            <person name="Ehrlich S.D."/>
            <person name="Sorokin A."/>
        </authorList>
    </citation>
    <scope>NUCLEOTIDE SEQUENCE [LARGE SCALE GENOMIC DNA]</scope>
    <source>
        <strain>IL1403</strain>
    </source>
</reference>
<sequence>MKIKDTLNLGKTAFPMRAGLPNKEPNWQKDWADATLYEKRQELNEGKPSFMLHDGPPYANGNIHLGHSLNKISKDIIVRYKSMAGFRAPYVPGWDTHGLPIEQQLAKAGMKRKEMDLLDYLEECRKYAMKQVDMQRSDFKSLGVLADWDRPYLTLLPEYEAAQIRVFGKMAEKGYIYKGQKPIYWSPSSESSLAEAEIEYQDVRSASIFVAFKAKDTKGKLPEDVEFVIWTTTPWTIPSNLGIFAHPDYDYSVVAVNGRKFVIASEMLEAVAEKLEWENPEVLQTIKGSELEYMVAKHPFYDRETLIMNADYVTLDSGTGLVHVAPGHGEDDYFASRKYKLPVLSPIDNRGYYTDEAPGLEGLLYDEGNKVVSKWLEEKDALLKLEFFTHSYPHDWRTKKPVIFRATPQWFASIDDFRQNILDEVERVDWVIPWGKTRLFNMVRDRGDWVISRQRAWGVPLPIFYGENGEPIITPETTEHVAKLFAEFGSKVWFEREAKDLLPEGFTHPASPNGEFTKEKDIMDVWFDSGSSWNGVLNERDYLSFPADLYLEGSDQYRGWFNSSITTSVAVNGVAPYKAVLSQGFVLDGKGRKMSKSIGNTIVPKDVTKKFGADILRLWVASIDTESDVRVSMDILSQVSEVYRKIRNTLRFLIANTSDFNPKEDAIDFAELRPVDKYMLVKFNELVKQIRTAYDNYSFMTVYKSIINFITNDLSSFYLDFAKDVVYIEAANSPERRSMQTVMYVILKDLVKILVPILPHTAEETWTYLEHEPENFAYLAEMPEAAEIPGSEELLGNWQEFLDFRDKILKALESAREAKLIGKSLEATVTIYPNEVVRTLLTAIDENVAQLLIVSNFVVANEPVNNAPESAMKFDDLAVLVEHAAGEVCDRCRRTDETVGHNANEHLKMLCEHCAHIVETEFPEILEEGFED</sequence>
<name>SYI_LACLA</name>
<protein>
    <recommendedName>
        <fullName evidence="1">Isoleucine--tRNA ligase</fullName>
        <ecNumber evidence="1">6.1.1.5</ecNumber>
    </recommendedName>
    <alternativeName>
        <fullName evidence="1">Isoleucyl-tRNA synthetase</fullName>
        <shortName evidence="1">IleRS</shortName>
    </alternativeName>
</protein>
<gene>
    <name evidence="1" type="primary">ileS</name>
    <name type="ordered locus">LL1863</name>
    <name type="ORF">L0350</name>
</gene>
<proteinExistence type="inferred from homology"/>
<dbReference type="EC" id="6.1.1.5" evidence="1"/>
<dbReference type="EMBL" id="AE005176">
    <property type="protein sequence ID" value="AAK05961.1"/>
    <property type="molecule type" value="Genomic_DNA"/>
</dbReference>
<dbReference type="PIR" id="G86857">
    <property type="entry name" value="G86857"/>
</dbReference>
<dbReference type="RefSeq" id="NP_268020.1">
    <property type="nucleotide sequence ID" value="NC_002662.1"/>
</dbReference>
<dbReference type="RefSeq" id="WP_010906172.1">
    <property type="nucleotide sequence ID" value="NC_002662.1"/>
</dbReference>
<dbReference type="SMR" id="Q9CEH8"/>
<dbReference type="PaxDb" id="272623-L0350"/>
<dbReference type="EnsemblBacteria" id="AAK05961">
    <property type="protein sequence ID" value="AAK05961"/>
    <property type="gene ID" value="L0350"/>
</dbReference>
<dbReference type="KEGG" id="lla:L0350"/>
<dbReference type="PATRIC" id="fig|272623.7.peg.1996"/>
<dbReference type="eggNOG" id="COG0060">
    <property type="taxonomic scope" value="Bacteria"/>
</dbReference>
<dbReference type="HOGENOM" id="CLU_001493_7_1_9"/>
<dbReference type="OrthoDB" id="9810365at2"/>
<dbReference type="Proteomes" id="UP000002196">
    <property type="component" value="Chromosome"/>
</dbReference>
<dbReference type="GO" id="GO:0005829">
    <property type="term" value="C:cytosol"/>
    <property type="evidence" value="ECO:0007669"/>
    <property type="project" value="TreeGrafter"/>
</dbReference>
<dbReference type="GO" id="GO:0002161">
    <property type="term" value="F:aminoacyl-tRNA deacylase activity"/>
    <property type="evidence" value="ECO:0007669"/>
    <property type="project" value="InterPro"/>
</dbReference>
<dbReference type="GO" id="GO:0005524">
    <property type="term" value="F:ATP binding"/>
    <property type="evidence" value="ECO:0007669"/>
    <property type="project" value="UniProtKB-UniRule"/>
</dbReference>
<dbReference type="GO" id="GO:0004822">
    <property type="term" value="F:isoleucine-tRNA ligase activity"/>
    <property type="evidence" value="ECO:0007669"/>
    <property type="project" value="UniProtKB-UniRule"/>
</dbReference>
<dbReference type="GO" id="GO:0000049">
    <property type="term" value="F:tRNA binding"/>
    <property type="evidence" value="ECO:0007669"/>
    <property type="project" value="InterPro"/>
</dbReference>
<dbReference type="GO" id="GO:0008270">
    <property type="term" value="F:zinc ion binding"/>
    <property type="evidence" value="ECO:0007669"/>
    <property type="project" value="UniProtKB-UniRule"/>
</dbReference>
<dbReference type="GO" id="GO:0006428">
    <property type="term" value="P:isoleucyl-tRNA aminoacylation"/>
    <property type="evidence" value="ECO:0007669"/>
    <property type="project" value="UniProtKB-UniRule"/>
</dbReference>
<dbReference type="CDD" id="cd07960">
    <property type="entry name" value="Anticodon_Ia_Ile_BEm"/>
    <property type="match status" value="1"/>
</dbReference>
<dbReference type="CDD" id="cd00818">
    <property type="entry name" value="IleRS_core"/>
    <property type="match status" value="1"/>
</dbReference>
<dbReference type="FunFam" id="1.10.10.830:FF:000001">
    <property type="entry name" value="Isoleucine--tRNA ligase"/>
    <property type="match status" value="1"/>
</dbReference>
<dbReference type="FunFam" id="1.10.730.20:FF:000001">
    <property type="entry name" value="Isoleucine--tRNA ligase"/>
    <property type="match status" value="1"/>
</dbReference>
<dbReference type="FunFam" id="3.40.50.620:FF:000152">
    <property type="entry name" value="Isoleucine--tRNA ligase"/>
    <property type="match status" value="1"/>
</dbReference>
<dbReference type="FunFam" id="3.40.50.620:FF:000305">
    <property type="entry name" value="Isoleucine--tRNA ligase"/>
    <property type="match status" value="1"/>
</dbReference>
<dbReference type="FunFam" id="3.90.740.10:FF:000006">
    <property type="entry name" value="Isoleucine--tRNA ligase"/>
    <property type="match status" value="1"/>
</dbReference>
<dbReference type="Gene3D" id="1.10.730.20">
    <property type="match status" value="1"/>
</dbReference>
<dbReference type="Gene3D" id="3.40.50.620">
    <property type="entry name" value="HUPs"/>
    <property type="match status" value="2"/>
</dbReference>
<dbReference type="Gene3D" id="1.10.10.830">
    <property type="entry name" value="Ile-tRNA synthetase CP2 domain-like"/>
    <property type="match status" value="1"/>
</dbReference>
<dbReference type="Gene3D" id="3.90.740.10">
    <property type="entry name" value="Valyl/Leucyl/Isoleucyl-tRNA synthetase, editing domain"/>
    <property type="match status" value="1"/>
</dbReference>
<dbReference type="HAMAP" id="MF_02002">
    <property type="entry name" value="Ile_tRNA_synth_type1"/>
    <property type="match status" value="1"/>
</dbReference>
<dbReference type="InterPro" id="IPR001412">
    <property type="entry name" value="aa-tRNA-synth_I_CS"/>
</dbReference>
<dbReference type="InterPro" id="IPR002300">
    <property type="entry name" value="aa-tRNA-synth_Ia"/>
</dbReference>
<dbReference type="InterPro" id="IPR033708">
    <property type="entry name" value="Anticodon_Ile_BEm"/>
</dbReference>
<dbReference type="InterPro" id="IPR002301">
    <property type="entry name" value="Ile-tRNA-ligase"/>
</dbReference>
<dbReference type="InterPro" id="IPR023585">
    <property type="entry name" value="Ile-tRNA-ligase_type1"/>
</dbReference>
<dbReference type="InterPro" id="IPR050081">
    <property type="entry name" value="Ile-tRNA_ligase"/>
</dbReference>
<dbReference type="InterPro" id="IPR013155">
    <property type="entry name" value="M/V/L/I-tRNA-synth_anticd-bd"/>
</dbReference>
<dbReference type="InterPro" id="IPR014729">
    <property type="entry name" value="Rossmann-like_a/b/a_fold"/>
</dbReference>
<dbReference type="InterPro" id="IPR009080">
    <property type="entry name" value="tRNAsynth_Ia_anticodon-bd"/>
</dbReference>
<dbReference type="InterPro" id="IPR009008">
    <property type="entry name" value="Val/Leu/Ile-tRNA-synth_edit"/>
</dbReference>
<dbReference type="NCBIfam" id="TIGR00392">
    <property type="entry name" value="ileS"/>
    <property type="match status" value="1"/>
</dbReference>
<dbReference type="PANTHER" id="PTHR42765:SF1">
    <property type="entry name" value="ISOLEUCINE--TRNA LIGASE, MITOCHONDRIAL"/>
    <property type="match status" value="1"/>
</dbReference>
<dbReference type="PANTHER" id="PTHR42765">
    <property type="entry name" value="SOLEUCYL-TRNA SYNTHETASE"/>
    <property type="match status" value="1"/>
</dbReference>
<dbReference type="Pfam" id="PF08264">
    <property type="entry name" value="Anticodon_1"/>
    <property type="match status" value="1"/>
</dbReference>
<dbReference type="Pfam" id="PF00133">
    <property type="entry name" value="tRNA-synt_1"/>
    <property type="match status" value="1"/>
</dbReference>
<dbReference type="PRINTS" id="PR00984">
    <property type="entry name" value="TRNASYNTHILE"/>
</dbReference>
<dbReference type="SUPFAM" id="SSF47323">
    <property type="entry name" value="Anticodon-binding domain of a subclass of class I aminoacyl-tRNA synthetases"/>
    <property type="match status" value="1"/>
</dbReference>
<dbReference type="SUPFAM" id="SSF52374">
    <property type="entry name" value="Nucleotidylyl transferase"/>
    <property type="match status" value="1"/>
</dbReference>
<dbReference type="SUPFAM" id="SSF50677">
    <property type="entry name" value="ValRS/IleRS/LeuRS editing domain"/>
    <property type="match status" value="1"/>
</dbReference>
<dbReference type="PROSITE" id="PS00178">
    <property type="entry name" value="AA_TRNA_LIGASE_I"/>
    <property type="match status" value="1"/>
</dbReference>
<organism>
    <name type="scientific">Lactococcus lactis subsp. lactis (strain IL1403)</name>
    <name type="common">Streptococcus lactis</name>
    <dbReference type="NCBI Taxonomy" id="272623"/>
    <lineage>
        <taxon>Bacteria</taxon>
        <taxon>Bacillati</taxon>
        <taxon>Bacillota</taxon>
        <taxon>Bacilli</taxon>
        <taxon>Lactobacillales</taxon>
        <taxon>Streptococcaceae</taxon>
        <taxon>Lactococcus</taxon>
    </lineage>
</organism>
<evidence type="ECO:0000255" key="1">
    <source>
        <dbReference type="HAMAP-Rule" id="MF_02002"/>
    </source>
</evidence>
<comment type="function">
    <text evidence="1">Catalyzes the attachment of isoleucine to tRNA(Ile). As IleRS can inadvertently accommodate and process structurally similar amino acids such as valine, to avoid such errors it has two additional distinct tRNA(Ile)-dependent editing activities. One activity is designated as 'pretransfer' editing and involves the hydrolysis of activated Val-AMP. The other activity is designated 'posttransfer' editing and involves deacylation of mischarged Val-tRNA(Ile).</text>
</comment>
<comment type="catalytic activity">
    <reaction evidence="1">
        <text>tRNA(Ile) + L-isoleucine + ATP = L-isoleucyl-tRNA(Ile) + AMP + diphosphate</text>
        <dbReference type="Rhea" id="RHEA:11060"/>
        <dbReference type="Rhea" id="RHEA-COMP:9666"/>
        <dbReference type="Rhea" id="RHEA-COMP:9695"/>
        <dbReference type="ChEBI" id="CHEBI:30616"/>
        <dbReference type="ChEBI" id="CHEBI:33019"/>
        <dbReference type="ChEBI" id="CHEBI:58045"/>
        <dbReference type="ChEBI" id="CHEBI:78442"/>
        <dbReference type="ChEBI" id="CHEBI:78528"/>
        <dbReference type="ChEBI" id="CHEBI:456215"/>
        <dbReference type="EC" id="6.1.1.5"/>
    </reaction>
</comment>
<comment type="cofactor">
    <cofactor evidence="1">
        <name>Zn(2+)</name>
        <dbReference type="ChEBI" id="CHEBI:29105"/>
    </cofactor>
    <text evidence="1">Binds 1 zinc ion per subunit.</text>
</comment>
<comment type="subunit">
    <text evidence="1">Monomer.</text>
</comment>
<comment type="subcellular location">
    <subcellularLocation>
        <location evidence="1">Cytoplasm</location>
    </subcellularLocation>
</comment>
<comment type="domain">
    <text evidence="1">IleRS has two distinct active sites: one for aminoacylation and one for editing. The misactivated valine is translocated from the active site to the editing site, which sterically excludes the correctly activated isoleucine. The single editing site contains two valyl binding pockets, one specific for each substrate (Val-AMP or Val-tRNA(Ile)).</text>
</comment>
<comment type="similarity">
    <text evidence="1">Belongs to the class-I aminoacyl-tRNA synthetase family. IleS type 1 subfamily.</text>
</comment>
<accession>Q9CEH8</accession>
<feature type="chain" id="PRO_0000098404" description="Isoleucine--tRNA ligase">
    <location>
        <begin position="1"/>
        <end position="932"/>
    </location>
</feature>
<feature type="short sequence motif" description="'HIGH' region">
    <location>
        <begin position="57"/>
        <end position="67"/>
    </location>
</feature>
<feature type="short sequence motif" description="'KMSKS' region">
    <location>
        <begin position="593"/>
        <end position="597"/>
    </location>
</feature>
<feature type="binding site" evidence="1">
    <location>
        <position position="552"/>
    </location>
    <ligand>
        <name>L-isoleucyl-5'-AMP</name>
        <dbReference type="ChEBI" id="CHEBI:178002"/>
    </ligand>
</feature>
<feature type="binding site" evidence="1">
    <location>
        <position position="596"/>
    </location>
    <ligand>
        <name>ATP</name>
        <dbReference type="ChEBI" id="CHEBI:30616"/>
    </ligand>
</feature>
<feature type="binding site" evidence="1">
    <location>
        <position position="889"/>
    </location>
    <ligand>
        <name>Zn(2+)</name>
        <dbReference type="ChEBI" id="CHEBI:29105"/>
    </ligand>
</feature>
<feature type="binding site" evidence="1">
    <location>
        <position position="892"/>
    </location>
    <ligand>
        <name>Zn(2+)</name>
        <dbReference type="ChEBI" id="CHEBI:29105"/>
    </ligand>
</feature>
<feature type="binding site" evidence="1">
    <location>
        <position position="911"/>
    </location>
    <ligand>
        <name>Zn(2+)</name>
        <dbReference type="ChEBI" id="CHEBI:29105"/>
    </ligand>
</feature>
<feature type="binding site" evidence="1">
    <location>
        <position position="914"/>
    </location>
    <ligand>
        <name>Zn(2+)</name>
        <dbReference type="ChEBI" id="CHEBI:29105"/>
    </ligand>
</feature>